<keyword id="KW-0963">Cytoplasm</keyword>
<keyword id="KW-0489">Methyltransferase</keyword>
<keyword id="KW-0698">rRNA processing</keyword>
<keyword id="KW-0949">S-adenosyl-L-methionine</keyword>
<keyword id="KW-0808">Transferase</keyword>
<accession>Q8E782</accession>
<sequence length="315" mass="35683">MTNDFHHITVLLHETVDMLDIKPDGIYVDATLGGAGHSEYLLSQLGPDGHLYAFDQDQKAIDNAHIRLKKYVDTGQVTFIKDNFRNLSSNLKALGVSEINGICYDLGVSSPQLDERERGFSYKQDAPLDMRMNREQSLTAYDVVNTYSYHDLVRIFFKYGEDKFSKQIARKIEQVRAEKPISTTTELAEIIKSSKSAKELKKKGHPAKQIFQAIRIEVNDELGAADESIQQAMDLLAVDGRISVITFHSLEDRLTKQLFKEASTVEVPKGLPFIPDDLQPKMELVNRKPILPSQEELEANNRAHSAKLRVARRIR</sequence>
<organism>
    <name type="scientific">Streptococcus agalactiae serotype III (strain NEM316)</name>
    <dbReference type="NCBI Taxonomy" id="211110"/>
    <lineage>
        <taxon>Bacteria</taxon>
        <taxon>Bacillati</taxon>
        <taxon>Bacillota</taxon>
        <taxon>Bacilli</taxon>
        <taxon>Lactobacillales</taxon>
        <taxon>Streptococcaceae</taxon>
        <taxon>Streptococcus</taxon>
    </lineage>
</organism>
<protein>
    <recommendedName>
        <fullName evidence="1">Ribosomal RNA small subunit methyltransferase H</fullName>
        <ecNumber evidence="1">2.1.1.199</ecNumber>
    </recommendedName>
    <alternativeName>
        <fullName evidence="1">16S rRNA m(4)C1402 methyltransferase</fullName>
    </alternativeName>
    <alternativeName>
        <fullName evidence="1">rRNA (cytosine-N(4)-)-methyltransferase RsmH</fullName>
    </alternativeName>
</protein>
<dbReference type="EC" id="2.1.1.199" evidence="1"/>
<dbReference type="EMBL" id="AL766844">
    <property type="protein sequence ID" value="CAD45920.1"/>
    <property type="molecule type" value="Genomic_DNA"/>
</dbReference>
<dbReference type="RefSeq" id="WP_000180264.1">
    <property type="nucleotide sequence ID" value="NC_004368.1"/>
</dbReference>
<dbReference type="SMR" id="Q8E782"/>
<dbReference type="KEGG" id="san:gbs0275"/>
<dbReference type="eggNOG" id="COG0275">
    <property type="taxonomic scope" value="Bacteria"/>
</dbReference>
<dbReference type="HOGENOM" id="CLU_038422_2_0_9"/>
<dbReference type="Proteomes" id="UP000000823">
    <property type="component" value="Chromosome"/>
</dbReference>
<dbReference type="GO" id="GO:0005737">
    <property type="term" value="C:cytoplasm"/>
    <property type="evidence" value="ECO:0007669"/>
    <property type="project" value="UniProtKB-SubCell"/>
</dbReference>
<dbReference type="GO" id="GO:0071424">
    <property type="term" value="F:rRNA (cytosine-N4-)-methyltransferase activity"/>
    <property type="evidence" value="ECO:0007669"/>
    <property type="project" value="UniProtKB-UniRule"/>
</dbReference>
<dbReference type="GO" id="GO:0070475">
    <property type="term" value="P:rRNA base methylation"/>
    <property type="evidence" value="ECO:0007669"/>
    <property type="project" value="UniProtKB-UniRule"/>
</dbReference>
<dbReference type="FunFam" id="1.10.150.170:FF:000001">
    <property type="entry name" value="Ribosomal RNA small subunit methyltransferase H"/>
    <property type="match status" value="1"/>
</dbReference>
<dbReference type="Gene3D" id="1.10.150.170">
    <property type="entry name" value="Putative methyltransferase TM0872, insert domain"/>
    <property type="match status" value="1"/>
</dbReference>
<dbReference type="Gene3D" id="3.40.50.150">
    <property type="entry name" value="Vaccinia Virus protein VP39"/>
    <property type="match status" value="1"/>
</dbReference>
<dbReference type="HAMAP" id="MF_01007">
    <property type="entry name" value="16SrRNA_methyltr_H"/>
    <property type="match status" value="1"/>
</dbReference>
<dbReference type="InterPro" id="IPR002903">
    <property type="entry name" value="RsmH"/>
</dbReference>
<dbReference type="InterPro" id="IPR023397">
    <property type="entry name" value="SAM-dep_MeTrfase_MraW_recog"/>
</dbReference>
<dbReference type="InterPro" id="IPR029063">
    <property type="entry name" value="SAM-dependent_MTases_sf"/>
</dbReference>
<dbReference type="NCBIfam" id="TIGR00006">
    <property type="entry name" value="16S rRNA (cytosine(1402)-N(4))-methyltransferase RsmH"/>
    <property type="match status" value="1"/>
</dbReference>
<dbReference type="PANTHER" id="PTHR11265:SF0">
    <property type="entry name" value="12S RRNA N4-METHYLCYTIDINE METHYLTRANSFERASE"/>
    <property type="match status" value="1"/>
</dbReference>
<dbReference type="PANTHER" id="PTHR11265">
    <property type="entry name" value="S-ADENOSYL-METHYLTRANSFERASE MRAW"/>
    <property type="match status" value="1"/>
</dbReference>
<dbReference type="Pfam" id="PF01795">
    <property type="entry name" value="Methyltransf_5"/>
    <property type="match status" value="1"/>
</dbReference>
<dbReference type="PIRSF" id="PIRSF004486">
    <property type="entry name" value="MraW"/>
    <property type="match status" value="1"/>
</dbReference>
<dbReference type="SUPFAM" id="SSF81799">
    <property type="entry name" value="Putative methyltransferase TM0872, insert domain"/>
    <property type="match status" value="1"/>
</dbReference>
<dbReference type="SUPFAM" id="SSF53335">
    <property type="entry name" value="S-adenosyl-L-methionine-dependent methyltransferases"/>
    <property type="match status" value="1"/>
</dbReference>
<feature type="chain" id="PRO_0000108714" description="Ribosomal RNA small subunit methyltransferase H">
    <location>
        <begin position="1"/>
        <end position="315"/>
    </location>
</feature>
<feature type="binding site" evidence="1">
    <location>
        <begin position="35"/>
        <end position="37"/>
    </location>
    <ligand>
        <name>S-adenosyl-L-methionine</name>
        <dbReference type="ChEBI" id="CHEBI:59789"/>
    </ligand>
</feature>
<feature type="binding site" evidence="1">
    <location>
        <position position="55"/>
    </location>
    <ligand>
        <name>S-adenosyl-L-methionine</name>
        <dbReference type="ChEBI" id="CHEBI:59789"/>
    </ligand>
</feature>
<feature type="binding site" evidence="1">
    <location>
        <position position="84"/>
    </location>
    <ligand>
        <name>S-adenosyl-L-methionine</name>
        <dbReference type="ChEBI" id="CHEBI:59789"/>
    </ligand>
</feature>
<feature type="binding site" evidence="1">
    <location>
        <position position="105"/>
    </location>
    <ligand>
        <name>S-adenosyl-L-methionine</name>
        <dbReference type="ChEBI" id="CHEBI:59789"/>
    </ligand>
</feature>
<feature type="binding site" evidence="1">
    <location>
        <position position="112"/>
    </location>
    <ligand>
        <name>S-adenosyl-L-methionine</name>
        <dbReference type="ChEBI" id="CHEBI:59789"/>
    </ligand>
</feature>
<evidence type="ECO:0000255" key="1">
    <source>
        <dbReference type="HAMAP-Rule" id="MF_01007"/>
    </source>
</evidence>
<gene>
    <name evidence="1" type="primary">rsmH</name>
    <name type="synonym">mraW</name>
    <name type="ordered locus">gbs0275</name>
</gene>
<proteinExistence type="inferred from homology"/>
<comment type="function">
    <text evidence="1">Specifically methylates the N4 position of cytidine in position 1402 (C1402) of 16S rRNA.</text>
</comment>
<comment type="catalytic activity">
    <reaction evidence="1">
        <text>cytidine(1402) in 16S rRNA + S-adenosyl-L-methionine = N(4)-methylcytidine(1402) in 16S rRNA + S-adenosyl-L-homocysteine + H(+)</text>
        <dbReference type="Rhea" id="RHEA:42928"/>
        <dbReference type="Rhea" id="RHEA-COMP:10286"/>
        <dbReference type="Rhea" id="RHEA-COMP:10287"/>
        <dbReference type="ChEBI" id="CHEBI:15378"/>
        <dbReference type="ChEBI" id="CHEBI:57856"/>
        <dbReference type="ChEBI" id="CHEBI:59789"/>
        <dbReference type="ChEBI" id="CHEBI:74506"/>
        <dbReference type="ChEBI" id="CHEBI:82748"/>
        <dbReference type="EC" id="2.1.1.199"/>
    </reaction>
</comment>
<comment type="subcellular location">
    <subcellularLocation>
        <location evidence="1">Cytoplasm</location>
    </subcellularLocation>
</comment>
<comment type="similarity">
    <text evidence="1">Belongs to the methyltransferase superfamily. RsmH family.</text>
</comment>
<name>RSMH_STRA3</name>
<reference key="1">
    <citation type="journal article" date="2002" name="Mol. Microbiol.">
        <title>Genome sequence of Streptococcus agalactiae, a pathogen causing invasive neonatal disease.</title>
        <authorList>
            <person name="Glaser P."/>
            <person name="Rusniok C."/>
            <person name="Buchrieser C."/>
            <person name="Chevalier F."/>
            <person name="Frangeul L."/>
            <person name="Msadek T."/>
            <person name="Zouine M."/>
            <person name="Couve E."/>
            <person name="Lalioui L."/>
            <person name="Poyart C."/>
            <person name="Trieu-Cuot P."/>
            <person name="Kunst F."/>
        </authorList>
    </citation>
    <scope>NUCLEOTIDE SEQUENCE [LARGE SCALE GENOMIC DNA]</scope>
    <source>
        <strain>NEM316</strain>
    </source>
</reference>